<protein>
    <recommendedName>
        <fullName evidence="1">tRNA (guanine-N(1)-)-methyltransferase</fullName>
        <ecNumber evidence="1">2.1.1.228</ecNumber>
    </recommendedName>
    <alternativeName>
        <fullName evidence="1">M1G-methyltransferase</fullName>
    </alternativeName>
    <alternativeName>
        <fullName evidence="1">tRNA [GM37] methyltransferase</fullName>
    </alternativeName>
</protein>
<comment type="function">
    <text evidence="1">Specifically methylates guanosine-37 in various tRNAs.</text>
</comment>
<comment type="catalytic activity">
    <reaction evidence="1">
        <text>guanosine(37) in tRNA + S-adenosyl-L-methionine = N(1)-methylguanosine(37) in tRNA + S-adenosyl-L-homocysteine + H(+)</text>
        <dbReference type="Rhea" id="RHEA:36899"/>
        <dbReference type="Rhea" id="RHEA-COMP:10145"/>
        <dbReference type="Rhea" id="RHEA-COMP:10147"/>
        <dbReference type="ChEBI" id="CHEBI:15378"/>
        <dbReference type="ChEBI" id="CHEBI:57856"/>
        <dbReference type="ChEBI" id="CHEBI:59789"/>
        <dbReference type="ChEBI" id="CHEBI:73542"/>
        <dbReference type="ChEBI" id="CHEBI:74269"/>
        <dbReference type="EC" id="2.1.1.228"/>
    </reaction>
</comment>
<comment type="subunit">
    <text evidence="1">Homodimer.</text>
</comment>
<comment type="subcellular location">
    <subcellularLocation>
        <location evidence="1">Cytoplasm</location>
    </subcellularLocation>
</comment>
<comment type="similarity">
    <text evidence="1">Belongs to the RNA methyltransferase TrmD family.</text>
</comment>
<name>TRMD_EXISA</name>
<gene>
    <name evidence="1" type="primary">trmD</name>
    <name type="ordered locus">EAT1b_2895</name>
</gene>
<organism>
    <name type="scientific">Exiguobacterium sp. (strain ATCC BAA-1283 / AT1b)</name>
    <dbReference type="NCBI Taxonomy" id="360911"/>
    <lineage>
        <taxon>Bacteria</taxon>
        <taxon>Bacillati</taxon>
        <taxon>Bacillota</taxon>
        <taxon>Bacilli</taxon>
        <taxon>Bacillales</taxon>
        <taxon>Bacillales Family XII. Incertae Sedis</taxon>
        <taxon>Exiguobacterium</taxon>
    </lineage>
</organism>
<accession>C4L603</accession>
<evidence type="ECO:0000255" key="1">
    <source>
        <dbReference type="HAMAP-Rule" id="MF_00605"/>
    </source>
</evidence>
<feature type="chain" id="PRO_1000212226" description="tRNA (guanine-N(1)-)-methyltransferase">
    <location>
        <begin position="1"/>
        <end position="238"/>
    </location>
</feature>
<feature type="binding site" evidence="1">
    <location>
        <position position="109"/>
    </location>
    <ligand>
        <name>S-adenosyl-L-methionine</name>
        <dbReference type="ChEBI" id="CHEBI:59789"/>
    </ligand>
</feature>
<feature type="binding site" evidence="1">
    <location>
        <begin position="129"/>
        <end position="134"/>
    </location>
    <ligand>
        <name>S-adenosyl-L-methionine</name>
        <dbReference type="ChEBI" id="CHEBI:59789"/>
    </ligand>
</feature>
<proteinExistence type="inferred from homology"/>
<reference key="1">
    <citation type="journal article" date="2011" name="J. Bacteriol.">
        <title>Complete genome sequence of the Thermophilic Bacterium Exiguobacterium sp. AT1b.</title>
        <authorList>
            <person name="Vishnivetskaya T.A."/>
            <person name="Lucas S."/>
            <person name="Copeland A."/>
            <person name="Lapidus A."/>
            <person name="Glavina del Rio T."/>
            <person name="Dalin E."/>
            <person name="Tice H."/>
            <person name="Bruce D.C."/>
            <person name="Goodwin L.A."/>
            <person name="Pitluck S."/>
            <person name="Saunders E."/>
            <person name="Brettin T."/>
            <person name="Detter C."/>
            <person name="Han C."/>
            <person name="Larimer F."/>
            <person name="Land M.L."/>
            <person name="Hauser L.J."/>
            <person name="Kyrpides N.C."/>
            <person name="Ovchinnikova G."/>
            <person name="Kathariou S."/>
            <person name="Ramaley R.F."/>
            <person name="Rodrigues D.F."/>
            <person name="Hendrix C."/>
            <person name="Richardson P."/>
            <person name="Tiedje J.M."/>
        </authorList>
    </citation>
    <scope>NUCLEOTIDE SEQUENCE [LARGE SCALE GENOMIC DNA]</scope>
    <source>
        <strain>ATCC BAA-1283 / AT1b</strain>
    </source>
</reference>
<keyword id="KW-0963">Cytoplasm</keyword>
<keyword id="KW-0489">Methyltransferase</keyword>
<keyword id="KW-0949">S-adenosyl-L-methionine</keyword>
<keyword id="KW-0808">Transferase</keyword>
<keyword id="KW-0819">tRNA processing</keyword>
<sequence>MKIDVLTLFPEMFHALDHSIVGRAKTLGQVEMSFLNFRDFSTNKHHKVDDYPYGGGAGMLLTPQPIFDAFHSLEAKSPRVILTTPTGKPFNQRMAEVWAKEEHLVFLCGHYEGFDQRIHDELATDEVSIGDFVLTGGELATMVMIDATVRLIPDVLNAQASHEDDSFSTGLLEYPHYTRPADFRGLTVPDVLLSGNHARIEAWRREQSLERTYRRRPDLLEHVELTDVDKKFLQSLRD</sequence>
<dbReference type="EC" id="2.1.1.228" evidence="1"/>
<dbReference type="EMBL" id="CP001615">
    <property type="protein sequence ID" value="ACQ71809.1"/>
    <property type="molecule type" value="Genomic_DNA"/>
</dbReference>
<dbReference type="RefSeq" id="WP_015881368.1">
    <property type="nucleotide sequence ID" value="NC_012673.1"/>
</dbReference>
<dbReference type="SMR" id="C4L603"/>
<dbReference type="STRING" id="360911.EAT1b_2895"/>
<dbReference type="KEGG" id="eat:EAT1b_2895"/>
<dbReference type="eggNOG" id="COG0336">
    <property type="taxonomic scope" value="Bacteria"/>
</dbReference>
<dbReference type="HOGENOM" id="CLU_047363_0_1_9"/>
<dbReference type="OrthoDB" id="9807416at2"/>
<dbReference type="Proteomes" id="UP000000716">
    <property type="component" value="Chromosome"/>
</dbReference>
<dbReference type="GO" id="GO:0005829">
    <property type="term" value="C:cytosol"/>
    <property type="evidence" value="ECO:0007669"/>
    <property type="project" value="TreeGrafter"/>
</dbReference>
<dbReference type="GO" id="GO:0052906">
    <property type="term" value="F:tRNA (guanine(37)-N1)-methyltransferase activity"/>
    <property type="evidence" value="ECO:0007669"/>
    <property type="project" value="UniProtKB-UniRule"/>
</dbReference>
<dbReference type="GO" id="GO:0002939">
    <property type="term" value="P:tRNA N1-guanine methylation"/>
    <property type="evidence" value="ECO:0007669"/>
    <property type="project" value="TreeGrafter"/>
</dbReference>
<dbReference type="CDD" id="cd18080">
    <property type="entry name" value="TrmD-like"/>
    <property type="match status" value="1"/>
</dbReference>
<dbReference type="FunFam" id="1.10.1270.20:FF:000001">
    <property type="entry name" value="tRNA (guanine-N(1)-)-methyltransferase"/>
    <property type="match status" value="1"/>
</dbReference>
<dbReference type="FunFam" id="3.40.1280.10:FF:000001">
    <property type="entry name" value="tRNA (guanine-N(1)-)-methyltransferase"/>
    <property type="match status" value="1"/>
</dbReference>
<dbReference type="Gene3D" id="3.40.1280.10">
    <property type="match status" value="1"/>
</dbReference>
<dbReference type="Gene3D" id="1.10.1270.20">
    <property type="entry name" value="tRNA(m1g37)methyltransferase, domain 2"/>
    <property type="match status" value="1"/>
</dbReference>
<dbReference type="HAMAP" id="MF_00605">
    <property type="entry name" value="TrmD"/>
    <property type="match status" value="1"/>
</dbReference>
<dbReference type="InterPro" id="IPR029028">
    <property type="entry name" value="Alpha/beta_knot_MTases"/>
</dbReference>
<dbReference type="InterPro" id="IPR023148">
    <property type="entry name" value="tRNA_m1G_MeTrfase_C_sf"/>
</dbReference>
<dbReference type="InterPro" id="IPR002649">
    <property type="entry name" value="tRNA_m1G_MeTrfase_TrmD"/>
</dbReference>
<dbReference type="InterPro" id="IPR029026">
    <property type="entry name" value="tRNA_m1G_MTases_N"/>
</dbReference>
<dbReference type="InterPro" id="IPR016009">
    <property type="entry name" value="tRNA_MeTrfase_TRMD/TRM10"/>
</dbReference>
<dbReference type="NCBIfam" id="NF000648">
    <property type="entry name" value="PRK00026.1"/>
    <property type="match status" value="1"/>
</dbReference>
<dbReference type="NCBIfam" id="TIGR00088">
    <property type="entry name" value="trmD"/>
    <property type="match status" value="1"/>
</dbReference>
<dbReference type="PANTHER" id="PTHR46417">
    <property type="entry name" value="TRNA (GUANINE-N(1)-)-METHYLTRANSFERASE"/>
    <property type="match status" value="1"/>
</dbReference>
<dbReference type="PANTHER" id="PTHR46417:SF1">
    <property type="entry name" value="TRNA (GUANINE-N(1)-)-METHYLTRANSFERASE"/>
    <property type="match status" value="1"/>
</dbReference>
<dbReference type="Pfam" id="PF01746">
    <property type="entry name" value="tRNA_m1G_MT"/>
    <property type="match status" value="1"/>
</dbReference>
<dbReference type="PIRSF" id="PIRSF000386">
    <property type="entry name" value="tRNA_mtase"/>
    <property type="match status" value="1"/>
</dbReference>
<dbReference type="SUPFAM" id="SSF75217">
    <property type="entry name" value="alpha/beta knot"/>
    <property type="match status" value="1"/>
</dbReference>